<keyword id="KW-0004">4Fe-4S</keyword>
<keyword id="KW-0963">Cytoplasm</keyword>
<keyword id="KW-0408">Iron</keyword>
<keyword id="KW-0411">Iron-sulfur</keyword>
<keyword id="KW-0479">Metal-binding</keyword>
<keyword id="KW-1185">Reference proteome</keyword>
<keyword id="KW-0949">S-adenosyl-L-methionine</keyword>
<keyword id="KW-0808">Transferase</keyword>
<keyword id="KW-0819">tRNA processing</keyword>
<evidence type="ECO:0000255" key="1">
    <source>
        <dbReference type="HAMAP-Rule" id="MF_01864"/>
    </source>
</evidence>
<evidence type="ECO:0000255" key="2">
    <source>
        <dbReference type="PROSITE-ProRule" id="PRU01266"/>
    </source>
</evidence>
<evidence type="ECO:0000305" key="3"/>
<comment type="function">
    <text evidence="1">Catalyzes the methylthiolation of N6-(dimethylallyl)adenosine (i(6)A), leading to the formation of 2-methylthio-N6-(dimethylallyl)adenosine (ms(2)i(6)A) at position 37 in tRNAs that read codons beginning with uridine.</text>
</comment>
<comment type="catalytic activity">
    <reaction evidence="1">
        <text>N(6)-dimethylallyladenosine(37) in tRNA + (sulfur carrier)-SH + AH2 + 2 S-adenosyl-L-methionine = 2-methylsulfanyl-N(6)-dimethylallyladenosine(37) in tRNA + (sulfur carrier)-H + 5'-deoxyadenosine + L-methionine + A + S-adenosyl-L-homocysteine + 2 H(+)</text>
        <dbReference type="Rhea" id="RHEA:37067"/>
        <dbReference type="Rhea" id="RHEA-COMP:10375"/>
        <dbReference type="Rhea" id="RHEA-COMP:10376"/>
        <dbReference type="Rhea" id="RHEA-COMP:14737"/>
        <dbReference type="Rhea" id="RHEA-COMP:14739"/>
        <dbReference type="ChEBI" id="CHEBI:13193"/>
        <dbReference type="ChEBI" id="CHEBI:15378"/>
        <dbReference type="ChEBI" id="CHEBI:17319"/>
        <dbReference type="ChEBI" id="CHEBI:17499"/>
        <dbReference type="ChEBI" id="CHEBI:29917"/>
        <dbReference type="ChEBI" id="CHEBI:57844"/>
        <dbReference type="ChEBI" id="CHEBI:57856"/>
        <dbReference type="ChEBI" id="CHEBI:59789"/>
        <dbReference type="ChEBI" id="CHEBI:64428"/>
        <dbReference type="ChEBI" id="CHEBI:74415"/>
        <dbReference type="ChEBI" id="CHEBI:74417"/>
        <dbReference type="EC" id="2.8.4.3"/>
    </reaction>
</comment>
<comment type="cofactor">
    <cofactor evidence="1">
        <name>[4Fe-4S] cluster</name>
        <dbReference type="ChEBI" id="CHEBI:49883"/>
    </cofactor>
    <text evidence="1">Binds 2 [4Fe-4S] clusters. One cluster is coordinated with 3 cysteines and an exchangeable S-adenosyl-L-methionine.</text>
</comment>
<comment type="subunit">
    <text evidence="1">Monomer.</text>
</comment>
<comment type="subcellular location">
    <subcellularLocation>
        <location evidence="1">Cytoplasm</location>
    </subcellularLocation>
</comment>
<comment type="similarity">
    <text evidence="1">Belongs to the methylthiotransferase family. MiaB subfamily.</text>
</comment>
<protein>
    <recommendedName>
        <fullName evidence="1">tRNA-2-methylthio-N(6)-dimethylallyladenosine synthase</fullName>
        <ecNumber evidence="1">2.8.4.3</ecNumber>
    </recommendedName>
    <alternativeName>
        <fullName evidence="1">(Dimethylallyl)adenosine tRNA methylthiotransferase MiaB</fullName>
    </alternativeName>
    <alternativeName>
        <fullName evidence="1">tRNA-i(6)A37 methylthiotransferase</fullName>
    </alternativeName>
</protein>
<accession>Q51470</accession>
<sequence length="446" mass="49978">MAKKLFIETHGCQMNEYDSSRMADLLGEHQALEVTENAAEADVILLNTCSIREKAQEKVFSKLGMWRELKQQNPDLVIGVGGCVASQEGAAIRERAPYVDVVFGPQTLHRLPEMIDAARSTRKPQVDVSFPEIEKFDRLPEPRVDGPTAFVSVMEGCSKYCSFCVVPYTRGEEVSRPFDDVIAEVIHLAENGVREVTLLGQNVNGFRGLTHDGRLADFAELLRVVAAVDGIERIRYTTSHPLEFSDALIQAHAEVPELVKFIHLPVQSGSDRVLAAMKRNHTVLEYKSRIRKLKAAVPDICISSDFIVGFPGETEKDFEQTMKLVEDVGFDFSFSFIYSARPGTPAADLADDLPEEVKKQRLQILQSRIHQQGYEISRRMVGSTQRILVTDFSKKDPGMLQGRTENNRIVNFRCDNPRLIGQFAQVHIDDALPHSLRGTLIDSTLH</sequence>
<name>MIAB_PSEAE</name>
<feature type="chain" id="PRO_0000141749" description="tRNA-2-methylthio-N(6)-dimethylallyladenosine synthase">
    <location>
        <begin position="1"/>
        <end position="446"/>
    </location>
</feature>
<feature type="domain" description="MTTase N-terminal" evidence="1">
    <location>
        <begin position="3"/>
        <end position="120"/>
    </location>
</feature>
<feature type="domain" description="Radical SAM core" evidence="2">
    <location>
        <begin position="143"/>
        <end position="375"/>
    </location>
</feature>
<feature type="domain" description="TRAM" evidence="1">
    <location>
        <begin position="378"/>
        <end position="442"/>
    </location>
</feature>
<feature type="binding site" evidence="1">
    <location>
        <position position="12"/>
    </location>
    <ligand>
        <name>[4Fe-4S] cluster</name>
        <dbReference type="ChEBI" id="CHEBI:49883"/>
        <label>1</label>
    </ligand>
</feature>
<feature type="binding site" evidence="1">
    <location>
        <position position="49"/>
    </location>
    <ligand>
        <name>[4Fe-4S] cluster</name>
        <dbReference type="ChEBI" id="CHEBI:49883"/>
        <label>1</label>
    </ligand>
</feature>
<feature type="binding site" evidence="1">
    <location>
        <position position="83"/>
    </location>
    <ligand>
        <name>[4Fe-4S] cluster</name>
        <dbReference type="ChEBI" id="CHEBI:49883"/>
        <label>1</label>
    </ligand>
</feature>
<feature type="binding site" evidence="1">
    <location>
        <position position="157"/>
    </location>
    <ligand>
        <name>[4Fe-4S] cluster</name>
        <dbReference type="ChEBI" id="CHEBI:49883"/>
        <label>2</label>
        <note>4Fe-4S-S-AdoMet</note>
    </ligand>
</feature>
<feature type="binding site" evidence="1">
    <location>
        <position position="161"/>
    </location>
    <ligand>
        <name>[4Fe-4S] cluster</name>
        <dbReference type="ChEBI" id="CHEBI:49883"/>
        <label>2</label>
        <note>4Fe-4S-S-AdoMet</note>
    </ligand>
</feature>
<feature type="binding site" evidence="1">
    <location>
        <position position="164"/>
    </location>
    <ligand>
        <name>[4Fe-4S] cluster</name>
        <dbReference type="ChEBI" id="CHEBI:49883"/>
        <label>2</label>
        <note>4Fe-4S-S-AdoMet</note>
    </ligand>
</feature>
<feature type="sequence conflict" description="In Ref. 1; CAA57577." evidence="3" ref="1">
    <original>A</original>
    <variation>V</variation>
    <location>
        <position position="55"/>
    </location>
</feature>
<feature type="sequence conflict" description="In Ref. 1; CAA57577." evidence="3" ref="1">
    <original>F</original>
    <variation>C</variation>
    <location>
        <position position="60"/>
    </location>
</feature>
<feature type="sequence conflict" description="In Ref. 1; CAA57577." evidence="3" ref="1">
    <original>K</original>
    <variation>E</variation>
    <location>
        <position position="395"/>
    </location>
</feature>
<organism>
    <name type="scientific">Pseudomonas aeruginosa (strain ATCC 15692 / DSM 22644 / CIP 104116 / JCM 14847 / LMG 12228 / 1C / PRS 101 / PAO1)</name>
    <dbReference type="NCBI Taxonomy" id="208964"/>
    <lineage>
        <taxon>Bacteria</taxon>
        <taxon>Pseudomonadati</taxon>
        <taxon>Pseudomonadota</taxon>
        <taxon>Gammaproteobacteria</taxon>
        <taxon>Pseudomonadales</taxon>
        <taxon>Pseudomonadaceae</taxon>
        <taxon>Pseudomonas</taxon>
    </lineage>
</organism>
<dbReference type="EC" id="2.8.4.3" evidence="1"/>
<dbReference type="EMBL" id="X82072">
    <property type="protein sequence ID" value="CAA57577.1"/>
    <property type="molecule type" value="Genomic_DNA"/>
</dbReference>
<dbReference type="EMBL" id="AE004091">
    <property type="protein sequence ID" value="AAG07367.1"/>
    <property type="molecule type" value="Genomic_DNA"/>
</dbReference>
<dbReference type="PIR" id="F83147">
    <property type="entry name" value="F83147"/>
</dbReference>
<dbReference type="PIR" id="S57900">
    <property type="entry name" value="S57900"/>
</dbReference>
<dbReference type="RefSeq" id="NP_252669.1">
    <property type="nucleotide sequence ID" value="NC_002516.2"/>
</dbReference>
<dbReference type="RefSeq" id="WP_003093158.1">
    <property type="nucleotide sequence ID" value="NZ_QZGE01000001.1"/>
</dbReference>
<dbReference type="SMR" id="Q51470"/>
<dbReference type="FunCoup" id="Q51470">
    <property type="interactions" value="676"/>
</dbReference>
<dbReference type="STRING" id="208964.PA3980"/>
<dbReference type="PaxDb" id="208964-PA3980"/>
<dbReference type="GeneID" id="878903"/>
<dbReference type="KEGG" id="pae:PA3980"/>
<dbReference type="PATRIC" id="fig|208964.12.peg.4172"/>
<dbReference type="PseudoCAP" id="PA3980"/>
<dbReference type="HOGENOM" id="CLU_018697_2_0_6"/>
<dbReference type="InParanoid" id="Q51470"/>
<dbReference type="OrthoDB" id="9805215at2"/>
<dbReference type="PhylomeDB" id="Q51470"/>
<dbReference type="BioCyc" id="PAER208964:G1FZ6-4054-MONOMER"/>
<dbReference type="Proteomes" id="UP000002438">
    <property type="component" value="Chromosome"/>
</dbReference>
<dbReference type="GO" id="GO:0005829">
    <property type="term" value="C:cytosol"/>
    <property type="evidence" value="ECO:0000318"/>
    <property type="project" value="GO_Central"/>
</dbReference>
<dbReference type="GO" id="GO:0051539">
    <property type="term" value="F:4 iron, 4 sulfur cluster binding"/>
    <property type="evidence" value="ECO:0000318"/>
    <property type="project" value="GO_Central"/>
</dbReference>
<dbReference type="GO" id="GO:0046872">
    <property type="term" value="F:metal ion binding"/>
    <property type="evidence" value="ECO:0007669"/>
    <property type="project" value="UniProtKB-KW"/>
</dbReference>
<dbReference type="GO" id="GO:0035597">
    <property type="term" value="F:N6-isopentenyladenosine methylthiotransferase activity"/>
    <property type="evidence" value="ECO:0000318"/>
    <property type="project" value="GO_Central"/>
</dbReference>
<dbReference type="GO" id="GO:0035600">
    <property type="term" value="P:tRNA methylthiolation"/>
    <property type="evidence" value="ECO:0000318"/>
    <property type="project" value="GO_Central"/>
</dbReference>
<dbReference type="CDD" id="cd01335">
    <property type="entry name" value="Radical_SAM"/>
    <property type="match status" value="1"/>
</dbReference>
<dbReference type="FunFam" id="3.40.50.12160:FF:000001">
    <property type="entry name" value="tRNA-2-methylthio-N(6)-dimethylallyladenosine synthase"/>
    <property type="match status" value="1"/>
</dbReference>
<dbReference type="FunFam" id="3.80.30.20:FF:000001">
    <property type="entry name" value="tRNA-2-methylthio-N(6)-dimethylallyladenosine synthase 2"/>
    <property type="match status" value="1"/>
</dbReference>
<dbReference type="Gene3D" id="3.40.50.12160">
    <property type="entry name" value="Methylthiotransferase, N-terminal domain"/>
    <property type="match status" value="1"/>
</dbReference>
<dbReference type="Gene3D" id="3.80.30.20">
    <property type="entry name" value="tm_1862 like domain"/>
    <property type="match status" value="1"/>
</dbReference>
<dbReference type="HAMAP" id="MF_01864">
    <property type="entry name" value="tRNA_metthiotr_MiaB"/>
    <property type="match status" value="1"/>
</dbReference>
<dbReference type="InterPro" id="IPR006638">
    <property type="entry name" value="Elp3/MiaA/NifB-like_rSAM"/>
</dbReference>
<dbReference type="InterPro" id="IPR005839">
    <property type="entry name" value="Methylthiotransferase"/>
</dbReference>
<dbReference type="InterPro" id="IPR020612">
    <property type="entry name" value="Methylthiotransferase_CS"/>
</dbReference>
<dbReference type="InterPro" id="IPR013848">
    <property type="entry name" value="Methylthiotransferase_N"/>
</dbReference>
<dbReference type="InterPro" id="IPR038135">
    <property type="entry name" value="Methylthiotransferase_N_sf"/>
</dbReference>
<dbReference type="InterPro" id="IPR006463">
    <property type="entry name" value="MiaB_methiolase"/>
</dbReference>
<dbReference type="InterPro" id="IPR007197">
    <property type="entry name" value="rSAM"/>
</dbReference>
<dbReference type="InterPro" id="IPR023404">
    <property type="entry name" value="rSAM_horseshoe"/>
</dbReference>
<dbReference type="InterPro" id="IPR002792">
    <property type="entry name" value="TRAM_dom"/>
</dbReference>
<dbReference type="NCBIfam" id="TIGR01574">
    <property type="entry name" value="miaB-methiolase"/>
    <property type="match status" value="1"/>
</dbReference>
<dbReference type="NCBIfam" id="TIGR00089">
    <property type="entry name" value="MiaB/RimO family radical SAM methylthiotransferase"/>
    <property type="match status" value="1"/>
</dbReference>
<dbReference type="PANTHER" id="PTHR43020">
    <property type="entry name" value="CDK5 REGULATORY SUBUNIT-ASSOCIATED PROTEIN 1"/>
    <property type="match status" value="1"/>
</dbReference>
<dbReference type="PANTHER" id="PTHR43020:SF2">
    <property type="entry name" value="MITOCHONDRIAL TRNA METHYLTHIOTRANSFERASE CDK5RAP1"/>
    <property type="match status" value="1"/>
</dbReference>
<dbReference type="Pfam" id="PF04055">
    <property type="entry name" value="Radical_SAM"/>
    <property type="match status" value="1"/>
</dbReference>
<dbReference type="Pfam" id="PF01938">
    <property type="entry name" value="TRAM"/>
    <property type="match status" value="1"/>
</dbReference>
<dbReference type="Pfam" id="PF00919">
    <property type="entry name" value="UPF0004"/>
    <property type="match status" value="1"/>
</dbReference>
<dbReference type="SFLD" id="SFLDF00273">
    <property type="entry name" value="(dimethylallyl)adenosine_tRNA"/>
    <property type="match status" value="1"/>
</dbReference>
<dbReference type="SFLD" id="SFLDG01082">
    <property type="entry name" value="B12-binding_domain_containing"/>
    <property type="match status" value="1"/>
</dbReference>
<dbReference type="SFLD" id="SFLDS00029">
    <property type="entry name" value="Radical_SAM"/>
    <property type="match status" value="1"/>
</dbReference>
<dbReference type="SMART" id="SM00729">
    <property type="entry name" value="Elp3"/>
    <property type="match status" value="1"/>
</dbReference>
<dbReference type="SUPFAM" id="SSF102114">
    <property type="entry name" value="Radical SAM enzymes"/>
    <property type="match status" value="1"/>
</dbReference>
<dbReference type="PROSITE" id="PS51449">
    <property type="entry name" value="MTTASE_N"/>
    <property type="match status" value="1"/>
</dbReference>
<dbReference type="PROSITE" id="PS01278">
    <property type="entry name" value="MTTASE_RADICAL"/>
    <property type="match status" value="1"/>
</dbReference>
<dbReference type="PROSITE" id="PS51918">
    <property type="entry name" value="RADICAL_SAM"/>
    <property type="match status" value="1"/>
</dbReference>
<dbReference type="PROSITE" id="PS50926">
    <property type="entry name" value="TRAM"/>
    <property type="match status" value="1"/>
</dbReference>
<proteinExistence type="inferred from homology"/>
<gene>
    <name evidence="1" type="primary">miaB</name>
    <name type="ordered locus">PA3980</name>
</gene>
<reference key="1">
    <citation type="journal article" date="1995" name="Mol. Gen. Genet.">
        <title>Cloning, mapping and characterization of the Pseudomonas aeruginosa hemL gene.</title>
        <authorList>
            <person name="Hungerer C."/>
            <person name="Troup B."/>
            <person name="Romling U."/>
            <person name="Jahn D."/>
        </authorList>
    </citation>
    <scope>NUCLEOTIDE SEQUENCE [GENOMIC DNA]</scope>
    <source>
        <strain>ATCC 15692 / DSM 22644 / CIP 104116 / JCM 14847 / LMG 12228 / 1C / PRS 101 / PAO1</strain>
    </source>
</reference>
<reference key="2">
    <citation type="journal article" date="2000" name="Nature">
        <title>Complete genome sequence of Pseudomonas aeruginosa PAO1, an opportunistic pathogen.</title>
        <authorList>
            <person name="Stover C.K."/>
            <person name="Pham X.-Q.T."/>
            <person name="Erwin A.L."/>
            <person name="Mizoguchi S.D."/>
            <person name="Warrener P."/>
            <person name="Hickey M.J."/>
            <person name="Brinkman F.S.L."/>
            <person name="Hufnagle W.O."/>
            <person name="Kowalik D.J."/>
            <person name="Lagrou M."/>
            <person name="Garber R.L."/>
            <person name="Goltry L."/>
            <person name="Tolentino E."/>
            <person name="Westbrock-Wadman S."/>
            <person name="Yuan Y."/>
            <person name="Brody L.L."/>
            <person name="Coulter S.N."/>
            <person name="Folger K.R."/>
            <person name="Kas A."/>
            <person name="Larbig K."/>
            <person name="Lim R.M."/>
            <person name="Smith K.A."/>
            <person name="Spencer D.H."/>
            <person name="Wong G.K.-S."/>
            <person name="Wu Z."/>
            <person name="Paulsen I.T."/>
            <person name="Reizer J."/>
            <person name="Saier M.H. Jr."/>
            <person name="Hancock R.E.W."/>
            <person name="Lory S."/>
            <person name="Olson M.V."/>
        </authorList>
    </citation>
    <scope>NUCLEOTIDE SEQUENCE [LARGE SCALE GENOMIC DNA]</scope>
    <source>
        <strain>ATCC 15692 / DSM 22644 / CIP 104116 / JCM 14847 / LMG 12228 / 1C / PRS 101 / PAO1</strain>
    </source>
</reference>